<sequence length="463" mass="50539">MSTAALVEGKIVQCIGAVIDVEFPRDSMPKIYDALILDGSELTLEVQQQLGDGVVRTICLGASDGLRRGLTVKNTSKPISVPVGKPTLGRIMDVLGRPIDEAGPIESEHTRSIHQKAPAFDELSPSTELLETGIKVIDLICPFAKGGKVGLFGGAGVGKTVNMMELINNIAKEHGGYSVFAGVGERTREGNDFYHEMKDSNVLDKVALVYGQMNEPPGNRLRVLTGLTMAEHFRDEGLDVLFFVDNIYRFTLAGTEVSALLGRMPSAVGYQPTLAEEMGKLQERITSTKKGSITSVQAVYVPADDLTDPSPATTFGHLDATVVLSRDIASLGIYPAVDPLDSTSRQIDPNVIGEEHYSITRRVQQTLQRYKELRDIIAILGMDELSPEDKLSVARARKIQRFLSQPFHVAEVFTGSPGKYVPLKETIRGFKMIVDGECDHLPEQAFYMVGTIDEAFEKAKKIS</sequence>
<accession>P42468</accession>
<name>ATPB_BURCE</name>
<gene>
    <name evidence="1" type="primary">atpD</name>
</gene>
<evidence type="ECO:0000255" key="1">
    <source>
        <dbReference type="HAMAP-Rule" id="MF_01347"/>
    </source>
</evidence>
<dbReference type="EC" id="7.1.2.2" evidence="1"/>
<dbReference type="EMBL" id="X76877">
    <property type="protein sequence ID" value="CAA54204.1"/>
    <property type="molecule type" value="Genomic_DNA"/>
</dbReference>
<dbReference type="SMR" id="P42468"/>
<dbReference type="STRING" id="292.WI67_00645"/>
<dbReference type="eggNOG" id="COG0055">
    <property type="taxonomic scope" value="Bacteria"/>
</dbReference>
<dbReference type="GO" id="GO:0005886">
    <property type="term" value="C:plasma membrane"/>
    <property type="evidence" value="ECO:0007669"/>
    <property type="project" value="UniProtKB-SubCell"/>
</dbReference>
<dbReference type="GO" id="GO:0045259">
    <property type="term" value="C:proton-transporting ATP synthase complex"/>
    <property type="evidence" value="ECO:0007669"/>
    <property type="project" value="UniProtKB-KW"/>
</dbReference>
<dbReference type="GO" id="GO:0005524">
    <property type="term" value="F:ATP binding"/>
    <property type="evidence" value="ECO:0007669"/>
    <property type="project" value="UniProtKB-UniRule"/>
</dbReference>
<dbReference type="GO" id="GO:0016887">
    <property type="term" value="F:ATP hydrolysis activity"/>
    <property type="evidence" value="ECO:0007669"/>
    <property type="project" value="InterPro"/>
</dbReference>
<dbReference type="GO" id="GO:0046933">
    <property type="term" value="F:proton-transporting ATP synthase activity, rotational mechanism"/>
    <property type="evidence" value="ECO:0007669"/>
    <property type="project" value="UniProtKB-UniRule"/>
</dbReference>
<dbReference type="CDD" id="cd18110">
    <property type="entry name" value="ATP-synt_F1_beta_C"/>
    <property type="match status" value="1"/>
</dbReference>
<dbReference type="CDD" id="cd18115">
    <property type="entry name" value="ATP-synt_F1_beta_N"/>
    <property type="match status" value="1"/>
</dbReference>
<dbReference type="CDD" id="cd01133">
    <property type="entry name" value="F1-ATPase_beta_CD"/>
    <property type="match status" value="1"/>
</dbReference>
<dbReference type="FunFam" id="1.10.1140.10:FF:000001">
    <property type="entry name" value="ATP synthase subunit beta"/>
    <property type="match status" value="1"/>
</dbReference>
<dbReference type="FunFam" id="3.40.50.300:FF:000004">
    <property type="entry name" value="ATP synthase subunit beta"/>
    <property type="match status" value="1"/>
</dbReference>
<dbReference type="Gene3D" id="2.40.10.170">
    <property type="match status" value="1"/>
</dbReference>
<dbReference type="Gene3D" id="1.10.1140.10">
    <property type="entry name" value="Bovine Mitochondrial F1-atpase, Atp Synthase Beta Chain, Chain D, domain 3"/>
    <property type="match status" value="1"/>
</dbReference>
<dbReference type="Gene3D" id="3.40.50.300">
    <property type="entry name" value="P-loop containing nucleotide triphosphate hydrolases"/>
    <property type="match status" value="1"/>
</dbReference>
<dbReference type="HAMAP" id="MF_01347">
    <property type="entry name" value="ATP_synth_beta_bact"/>
    <property type="match status" value="1"/>
</dbReference>
<dbReference type="InterPro" id="IPR003593">
    <property type="entry name" value="AAA+_ATPase"/>
</dbReference>
<dbReference type="InterPro" id="IPR055190">
    <property type="entry name" value="ATP-synt_VA_C"/>
</dbReference>
<dbReference type="InterPro" id="IPR005722">
    <property type="entry name" value="ATP_synth_F1_bsu"/>
</dbReference>
<dbReference type="InterPro" id="IPR020003">
    <property type="entry name" value="ATPase_a/bsu_AS"/>
</dbReference>
<dbReference type="InterPro" id="IPR050053">
    <property type="entry name" value="ATPase_alpha/beta_chains"/>
</dbReference>
<dbReference type="InterPro" id="IPR004100">
    <property type="entry name" value="ATPase_F1/V1/A1_a/bsu_N"/>
</dbReference>
<dbReference type="InterPro" id="IPR036121">
    <property type="entry name" value="ATPase_F1/V1/A1_a/bsu_N_sf"/>
</dbReference>
<dbReference type="InterPro" id="IPR000194">
    <property type="entry name" value="ATPase_F1/V1/A1_a/bsu_nucl-bd"/>
</dbReference>
<dbReference type="InterPro" id="IPR024034">
    <property type="entry name" value="ATPase_F1/V1_b/a_C"/>
</dbReference>
<dbReference type="InterPro" id="IPR027417">
    <property type="entry name" value="P-loop_NTPase"/>
</dbReference>
<dbReference type="NCBIfam" id="TIGR01039">
    <property type="entry name" value="atpD"/>
    <property type="match status" value="1"/>
</dbReference>
<dbReference type="PANTHER" id="PTHR15184">
    <property type="entry name" value="ATP SYNTHASE"/>
    <property type="match status" value="1"/>
</dbReference>
<dbReference type="PANTHER" id="PTHR15184:SF71">
    <property type="entry name" value="ATP SYNTHASE SUBUNIT BETA, MITOCHONDRIAL"/>
    <property type="match status" value="1"/>
</dbReference>
<dbReference type="Pfam" id="PF00006">
    <property type="entry name" value="ATP-synt_ab"/>
    <property type="match status" value="1"/>
</dbReference>
<dbReference type="Pfam" id="PF02874">
    <property type="entry name" value="ATP-synt_ab_N"/>
    <property type="match status" value="1"/>
</dbReference>
<dbReference type="Pfam" id="PF22919">
    <property type="entry name" value="ATP-synt_VA_C"/>
    <property type="match status" value="1"/>
</dbReference>
<dbReference type="SMART" id="SM00382">
    <property type="entry name" value="AAA"/>
    <property type="match status" value="1"/>
</dbReference>
<dbReference type="SUPFAM" id="SSF47917">
    <property type="entry name" value="C-terminal domain of alpha and beta subunits of F1 ATP synthase"/>
    <property type="match status" value="1"/>
</dbReference>
<dbReference type="SUPFAM" id="SSF50615">
    <property type="entry name" value="N-terminal domain of alpha and beta subunits of F1 ATP synthase"/>
    <property type="match status" value="1"/>
</dbReference>
<dbReference type="SUPFAM" id="SSF52540">
    <property type="entry name" value="P-loop containing nucleoside triphosphate hydrolases"/>
    <property type="match status" value="1"/>
</dbReference>
<dbReference type="PROSITE" id="PS00152">
    <property type="entry name" value="ATPASE_ALPHA_BETA"/>
    <property type="match status" value="1"/>
</dbReference>
<reference key="1">
    <citation type="journal article" date="1993" name="Antonie Van Leeuwenhoek">
        <title>Phylogenetic relationships of Bacteria based on comparative sequence analysis of elongation factor Tu and ATP-synthase beta-subunit genes.</title>
        <authorList>
            <person name="Ludwig W."/>
            <person name="Neumaier J."/>
            <person name="Klugbauer N."/>
            <person name="Brockmann E."/>
            <person name="Roller C."/>
            <person name="Klugbauer S."/>
            <person name="Reetz K."/>
            <person name="Schachtner I."/>
            <person name="Ludvigsen A."/>
            <person name="Bachleitner M."/>
            <person name="Fischer U."/>
            <person name="Schleifer K.H."/>
        </authorList>
    </citation>
    <scope>NUCLEOTIDE SEQUENCE [GENOMIC DNA]</scope>
    <source>
        <strain>ATCC 17759 / DSM 50181 / JCM 2799 / NCIMB 9085 / NCTC 10661</strain>
    </source>
</reference>
<organism>
    <name type="scientific">Burkholderia cepacia</name>
    <name type="common">Pseudomonas cepacia</name>
    <dbReference type="NCBI Taxonomy" id="292"/>
    <lineage>
        <taxon>Bacteria</taxon>
        <taxon>Pseudomonadati</taxon>
        <taxon>Pseudomonadota</taxon>
        <taxon>Betaproteobacteria</taxon>
        <taxon>Burkholderiales</taxon>
        <taxon>Burkholderiaceae</taxon>
        <taxon>Burkholderia</taxon>
        <taxon>Burkholderia cepacia complex</taxon>
    </lineage>
</organism>
<proteinExistence type="inferred from homology"/>
<comment type="function">
    <text evidence="1">Produces ATP from ADP in the presence of a proton gradient across the membrane. The catalytic sites are hosted primarily by the beta subunits.</text>
</comment>
<comment type="catalytic activity">
    <reaction evidence="1">
        <text>ATP + H2O + 4 H(+)(in) = ADP + phosphate + 5 H(+)(out)</text>
        <dbReference type="Rhea" id="RHEA:57720"/>
        <dbReference type="ChEBI" id="CHEBI:15377"/>
        <dbReference type="ChEBI" id="CHEBI:15378"/>
        <dbReference type="ChEBI" id="CHEBI:30616"/>
        <dbReference type="ChEBI" id="CHEBI:43474"/>
        <dbReference type="ChEBI" id="CHEBI:456216"/>
        <dbReference type="EC" id="7.1.2.2"/>
    </reaction>
</comment>
<comment type="subunit">
    <text evidence="1">F-type ATPases have 2 components, CF(1) - the catalytic core - and CF(0) - the membrane proton channel. CF(1) has five subunits: alpha(3), beta(3), gamma(1), delta(1), epsilon(1). CF(0) has three main subunits: a(1), b(2) and c(9-12). The alpha and beta chains form an alternating ring which encloses part of the gamma chain. CF(1) is attached to CF(0) by a central stalk formed by the gamma and epsilon chains, while a peripheral stalk is formed by the delta and b chains.</text>
</comment>
<comment type="subcellular location">
    <subcellularLocation>
        <location evidence="1">Cell inner membrane</location>
        <topology evidence="1">Peripheral membrane protein</topology>
    </subcellularLocation>
</comment>
<comment type="similarity">
    <text evidence="1">Belongs to the ATPase alpha/beta chains family.</text>
</comment>
<feature type="chain" id="PRO_0000144429" description="ATP synthase subunit beta">
    <location>
        <begin position="1"/>
        <end position="463"/>
    </location>
</feature>
<feature type="binding site" evidence="1">
    <location>
        <begin position="153"/>
        <end position="160"/>
    </location>
    <ligand>
        <name>ATP</name>
        <dbReference type="ChEBI" id="CHEBI:30616"/>
    </ligand>
</feature>
<protein>
    <recommendedName>
        <fullName evidence="1">ATP synthase subunit beta</fullName>
        <ecNumber evidence="1">7.1.2.2</ecNumber>
    </recommendedName>
    <alternativeName>
        <fullName evidence="1">ATP synthase F1 sector subunit beta</fullName>
    </alternativeName>
    <alternativeName>
        <fullName evidence="1">F-ATPase subunit beta</fullName>
    </alternativeName>
</protein>
<keyword id="KW-0066">ATP synthesis</keyword>
<keyword id="KW-0067">ATP-binding</keyword>
<keyword id="KW-0997">Cell inner membrane</keyword>
<keyword id="KW-1003">Cell membrane</keyword>
<keyword id="KW-0139">CF(1)</keyword>
<keyword id="KW-0375">Hydrogen ion transport</keyword>
<keyword id="KW-0406">Ion transport</keyword>
<keyword id="KW-0472">Membrane</keyword>
<keyword id="KW-0547">Nucleotide-binding</keyword>
<keyword id="KW-1278">Translocase</keyword>
<keyword id="KW-0813">Transport</keyword>